<accession>B7UIW1</accession>
<reference key="1">
    <citation type="journal article" date="2009" name="J. Bacteriol.">
        <title>Complete genome sequence and comparative genome analysis of enteropathogenic Escherichia coli O127:H6 strain E2348/69.</title>
        <authorList>
            <person name="Iguchi A."/>
            <person name="Thomson N.R."/>
            <person name="Ogura Y."/>
            <person name="Saunders D."/>
            <person name="Ooka T."/>
            <person name="Henderson I.R."/>
            <person name="Harris D."/>
            <person name="Asadulghani M."/>
            <person name="Kurokawa K."/>
            <person name="Dean P."/>
            <person name="Kenny B."/>
            <person name="Quail M.A."/>
            <person name="Thurston S."/>
            <person name="Dougan G."/>
            <person name="Hayashi T."/>
            <person name="Parkhill J."/>
            <person name="Frankel G."/>
        </authorList>
    </citation>
    <scope>NUCLEOTIDE SEQUENCE [LARGE SCALE GENOMIC DNA]</scope>
    <source>
        <strain>E2348/69 / EPEC</strain>
    </source>
</reference>
<keyword id="KW-0067">ATP-binding</keyword>
<keyword id="KW-0460">Magnesium</keyword>
<keyword id="KW-0511">Multifunctional enzyme</keyword>
<keyword id="KW-0547">Nucleotide-binding</keyword>
<keyword id="KW-0548">Nucleotidyltransferase</keyword>
<keyword id="KW-1185">Reference proteome</keyword>
<keyword id="KW-0808">Transferase</keyword>
<sequence>MKPLSSPLQQYWQTVVERLPEPLAEESLSAQAKSVLTFSDFLQDSIIAHPEWLTELESQPPQADEWQHYAAWLQEALSNVSDEAGLMRELRLFRRRIMVRIAWAQTLALVTEESILQQLSHLAETLIVAARDWLYDACCREWGTPCNAQGEAQPLLILGMGKLGGGELNFSSDIDLIFAWPEHGCTQGGRRELDNAQFFTRMGQRLIKVQDQPTQDGFVYRVDMRLRPFGESGPLVLSFAALEDYYQEQGRDWERYAMVKARIMGDSDGVYANELRAMLRPFVFRRYIDFSVIQSLRNMKGMIAREVRRRGLTDNIKLGAGGIREIEFIVQVFQLIRGGREPSLQSRSLLPTLSAIAALHLLSENDAEQLRVAYLFLRRLENLLQSINDEQTQTLPFDELNRARLAWAMDFADWPQLTGVLTAHMANVRRVFNELIGDDESETQEESLSEQWRELWQDALQEDDTTPVLAHLSEDDRKQVLMLIADFRKELDKRTIGPRGRQVLDHLMPHLLSDVCAREDAAVTLSRITALLVGIVTRTTYLELLSEFPAALKHLISLCAASPMIASQLARYPLLLDELLDPNTLYQPTATDAYRDELRQYLLRVPEDDEEQQLEALRQFKQAQLLRIAAADIAGTLPVMKVSDHLTWLAEAMIDAVVQQAWVQMVARYGKPNHLNEREGRGFAVVGYGKLGGWELGYSSDLDLIFLHDCPMDAMTDGEREIDGRQFYLRLAQRIMHLFSTRTSSGILYEVDARLRPSGAAGMLVTSAEAFADYQKNEAWTWEHQALVRARVVYGDPQLTAHFDAVRREIMTLPREGKTLQTEVREMREKMRAHLGNKHRDRFDIKADEGGITDIEFITQYLVLRYAHEKPKLTRWSDNVRILELLAQNDIMEEQEAMALTRAYTTLRDELHHLALQELPGHVSEDCFTAERELVRASWQKWLVEE</sequence>
<dbReference type="EC" id="2.7.7.89" evidence="1"/>
<dbReference type="EC" id="2.7.7.42" evidence="1"/>
<dbReference type="EMBL" id="FM180568">
    <property type="protein sequence ID" value="CAS10894.1"/>
    <property type="molecule type" value="Genomic_DNA"/>
</dbReference>
<dbReference type="RefSeq" id="WP_012579003.1">
    <property type="nucleotide sequence ID" value="NC_011601.1"/>
</dbReference>
<dbReference type="SMR" id="B7UIW1"/>
<dbReference type="KEGG" id="ecg:E2348C_3346"/>
<dbReference type="HOGENOM" id="CLU_006233_0_1_6"/>
<dbReference type="Proteomes" id="UP000008205">
    <property type="component" value="Chromosome"/>
</dbReference>
<dbReference type="GO" id="GO:0005829">
    <property type="term" value="C:cytosol"/>
    <property type="evidence" value="ECO:0007669"/>
    <property type="project" value="TreeGrafter"/>
</dbReference>
<dbReference type="GO" id="GO:0008882">
    <property type="term" value="F:[glutamate-ammonia-ligase] adenylyltransferase activity"/>
    <property type="evidence" value="ECO:0007669"/>
    <property type="project" value="UniProtKB-UniRule"/>
</dbReference>
<dbReference type="GO" id="GO:0047388">
    <property type="term" value="F:[glutamine synthetase]-adenylyl-L-tyrosine phosphorylase activity"/>
    <property type="evidence" value="ECO:0007669"/>
    <property type="project" value="UniProtKB-EC"/>
</dbReference>
<dbReference type="GO" id="GO:0005524">
    <property type="term" value="F:ATP binding"/>
    <property type="evidence" value="ECO:0007669"/>
    <property type="project" value="UniProtKB-UniRule"/>
</dbReference>
<dbReference type="GO" id="GO:0000287">
    <property type="term" value="F:magnesium ion binding"/>
    <property type="evidence" value="ECO:0007669"/>
    <property type="project" value="UniProtKB-UniRule"/>
</dbReference>
<dbReference type="GO" id="GO:0000820">
    <property type="term" value="P:regulation of glutamine family amino acid metabolic process"/>
    <property type="evidence" value="ECO:0007669"/>
    <property type="project" value="UniProtKB-UniRule"/>
</dbReference>
<dbReference type="CDD" id="cd05401">
    <property type="entry name" value="NT_GlnE_GlnD_like"/>
    <property type="match status" value="2"/>
</dbReference>
<dbReference type="FunFam" id="1.10.4050.10:FF:000001">
    <property type="entry name" value="Bifunctional glutamine synthetase adenylyltransferase/adenylyl-removing enzyme"/>
    <property type="match status" value="1"/>
</dbReference>
<dbReference type="FunFam" id="1.20.120.1510:FF:000001">
    <property type="entry name" value="Bifunctional glutamine synthetase adenylyltransferase/adenylyl-removing enzyme"/>
    <property type="match status" value="1"/>
</dbReference>
<dbReference type="FunFam" id="1.20.120.330:FF:000005">
    <property type="entry name" value="Bifunctional glutamine synthetase adenylyltransferase/adenylyl-removing enzyme"/>
    <property type="match status" value="1"/>
</dbReference>
<dbReference type="FunFam" id="1.20.120.330:FF:000008">
    <property type="entry name" value="Bifunctional glutamine synthetase adenylyltransferase/adenylyl-removing enzyme"/>
    <property type="match status" value="1"/>
</dbReference>
<dbReference type="FunFam" id="3.30.460.10:FF:000009">
    <property type="entry name" value="Bifunctional glutamine synthetase adenylyltransferase/adenylyl-removing enzyme"/>
    <property type="match status" value="1"/>
</dbReference>
<dbReference type="FunFam" id="3.30.460.10:FF:000014">
    <property type="entry name" value="Bifunctional glutamine synthetase adenylyltransferase/adenylyl-removing enzyme"/>
    <property type="match status" value="1"/>
</dbReference>
<dbReference type="Gene3D" id="1.20.120.1510">
    <property type="match status" value="1"/>
</dbReference>
<dbReference type="Gene3D" id="3.30.460.10">
    <property type="entry name" value="Beta Polymerase, domain 2"/>
    <property type="match status" value="2"/>
</dbReference>
<dbReference type="Gene3D" id="1.10.4050.10">
    <property type="entry name" value="Glutamine synthase adenylyltransferase GlnE"/>
    <property type="match status" value="1"/>
</dbReference>
<dbReference type="Gene3D" id="1.20.120.330">
    <property type="entry name" value="Nucleotidyltransferases domain 2"/>
    <property type="match status" value="2"/>
</dbReference>
<dbReference type="HAMAP" id="MF_00802">
    <property type="entry name" value="GlnE"/>
    <property type="match status" value="1"/>
</dbReference>
<dbReference type="InterPro" id="IPR023057">
    <property type="entry name" value="GlnE"/>
</dbReference>
<dbReference type="InterPro" id="IPR005190">
    <property type="entry name" value="GlnE_rpt_dom"/>
</dbReference>
<dbReference type="InterPro" id="IPR043519">
    <property type="entry name" value="NT_sf"/>
</dbReference>
<dbReference type="InterPro" id="IPR013546">
    <property type="entry name" value="PII_UdlTrfase/GS_AdlTrfase"/>
</dbReference>
<dbReference type="NCBIfam" id="NF008292">
    <property type="entry name" value="PRK11072.1"/>
    <property type="match status" value="1"/>
</dbReference>
<dbReference type="PANTHER" id="PTHR30621:SF0">
    <property type="entry name" value="BIFUNCTIONAL GLUTAMINE SYNTHETASE ADENYLYLTRANSFERASE_ADENYLYL-REMOVING ENZYME"/>
    <property type="match status" value="1"/>
</dbReference>
<dbReference type="PANTHER" id="PTHR30621">
    <property type="entry name" value="GLUTAMINE SYNTHETASE ADENYLYLTRANSFERASE"/>
    <property type="match status" value="1"/>
</dbReference>
<dbReference type="Pfam" id="PF08335">
    <property type="entry name" value="GlnD_UR_UTase"/>
    <property type="match status" value="2"/>
</dbReference>
<dbReference type="Pfam" id="PF03710">
    <property type="entry name" value="GlnE"/>
    <property type="match status" value="2"/>
</dbReference>
<dbReference type="SUPFAM" id="SSF81301">
    <property type="entry name" value="Nucleotidyltransferase"/>
    <property type="match status" value="2"/>
</dbReference>
<dbReference type="SUPFAM" id="SSF81593">
    <property type="entry name" value="Nucleotidyltransferase substrate binding subunit/domain"/>
    <property type="match status" value="2"/>
</dbReference>
<organism>
    <name type="scientific">Escherichia coli O127:H6 (strain E2348/69 / EPEC)</name>
    <dbReference type="NCBI Taxonomy" id="574521"/>
    <lineage>
        <taxon>Bacteria</taxon>
        <taxon>Pseudomonadati</taxon>
        <taxon>Pseudomonadota</taxon>
        <taxon>Gammaproteobacteria</taxon>
        <taxon>Enterobacterales</taxon>
        <taxon>Enterobacteriaceae</taxon>
        <taxon>Escherichia</taxon>
    </lineage>
</organism>
<proteinExistence type="inferred from homology"/>
<gene>
    <name evidence="1" type="primary">glnE</name>
    <name type="ordered locus">E2348C_3346</name>
</gene>
<evidence type="ECO:0000255" key="1">
    <source>
        <dbReference type="HAMAP-Rule" id="MF_00802"/>
    </source>
</evidence>
<comment type="function">
    <text evidence="1">Involved in the regulation of glutamine synthetase GlnA, a key enzyme in the process to assimilate ammonia. When cellular nitrogen levels are high, the C-terminal adenylyl transferase (AT) inactivates GlnA by covalent transfer of an adenylyl group from ATP to specific tyrosine residue of GlnA, thus reducing its activity. Conversely, when nitrogen levels are low, the N-terminal adenylyl removase (AR) activates GlnA by removing the adenylyl group by phosphorolysis, increasing its activity. The regulatory region of GlnE binds the signal transduction protein PII (GlnB) which indicates the nitrogen status of the cell.</text>
</comment>
<comment type="catalytic activity">
    <reaction evidence="1">
        <text>[glutamine synthetase]-O(4)-(5'-adenylyl)-L-tyrosine + phosphate = [glutamine synthetase]-L-tyrosine + ADP</text>
        <dbReference type="Rhea" id="RHEA:43716"/>
        <dbReference type="Rhea" id="RHEA-COMP:10660"/>
        <dbReference type="Rhea" id="RHEA-COMP:10661"/>
        <dbReference type="ChEBI" id="CHEBI:43474"/>
        <dbReference type="ChEBI" id="CHEBI:46858"/>
        <dbReference type="ChEBI" id="CHEBI:83624"/>
        <dbReference type="ChEBI" id="CHEBI:456216"/>
        <dbReference type="EC" id="2.7.7.89"/>
    </reaction>
</comment>
<comment type="catalytic activity">
    <reaction evidence="1">
        <text>[glutamine synthetase]-L-tyrosine + ATP = [glutamine synthetase]-O(4)-(5'-adenylyl)-L-tyrosine + diphosphate</text>
        <dbReference type="Rhea" id="RHEA:18589"/>
        <dbReference type="Rhea" id="RHEA-COMP:10660"/>
        <dbReference type="Rhea" id="RHEA-COMP:10661"/>
        <dbReference type="ChEBI" id="CHEBI:30616"/>
        <dbReference type="ChEBI" id="CHEBI:33019"/>
        <dbReference type="ChEBI" id="CHEBI:46858"/>
        <dbReference type="ChEBI" id="CHEBI:83624"/>
        <dbReference type="EC" id="2.7.7.42"/>
    </reaction>
</comment>
<comment type="cofactor">
    <cofactor evidence="1">
        <name>Mg(2+)</name>
        <dbReference type="ChEBI" id="CHEBI:18420"/>
    </cofactor>
</comment>
<comment type="similarity">
    <text evidence="1">Belongs to the GlnE family.</text>
</comment>
<feature type="chain" id="PRO_1000148542" description="Bifunctional glutamine synthetase adenylyltransferase/adenylyl-removing enzyme">
    <location>
        <begin position="1"/>
        <end position="946"/>
    </location>
</feature>
<feature type="region of interest" description="Adenylyl removase" evidence="1">
    <location>
        <begin position="1"/>
        <end position="440"/>
    </location>
</feature>
<feature type="region of interest" description="Adenylyl transferase" evidence="1">
    <location>
        <begin position="449"/>
        <end position="946"/>
    </location>
</feature>
<name>GLNE_ECO27</name>
<protein>
    <recommendedName>
        <fullName evidence="1">Bifunctional glutamine synthetase adenylyltransferase/adenylyl-removing enzyme</fullName>
    </recommendedName>
    <alternativeName>
        <fullName evidence="1">ATP:glutamine synthetase adenylyltransferase</fullName>
    </alternativeName>
    <alternativeName>
        <fullName evidence="1">ATase</fullName>
    </alternativeName>
    <domain>
        <recommendedName>
            <fullName evidence="1">Glutamine synthetase adenylyl-L-tyrosine phosphorylase</fullName>
            <ecNumber evidence="1">2.7.7.89</ecNumber>
        </recommendedName>
        <alternativeName>
            <fullName evidence="1">Adenylyl removase</fullName>
            <shortName evidence="1">AR</shortName>
            <shortName evidence="1">AT-N</shortName>
        </alternativeName>
    </domain>
    <domain>
        <recommendedName>
            <fullName evidence="1">Glutamine synthetase adenylyl transferase</fullName>
            <ecNumber evidence="1">2.7.7.42</ecNumber>
        </recommendedName>
        <alternativeName>
            <fullName evidence="1">Adenylyl transferase</fullName>
            <shortName evidence="1">AT</shortName>
            <shortName evidence="1">AT-C</shortName>
        </alternativeName>
    </domain>
</protein>